<proteinExistence type="inferred from homology"/>
<name>IDI_SHIBS</name>
<gene>
    <name evidence="1" type="primary">idi</name>
    <name type="ordered locus">SBO_3103</name>
</gene>
<organism>
    <name type="scientific">Shigella boydii serotype 4 (strain Sb227)</name>
    <dbReference type="NCBI Taxonomy" id="300268"/>
    <lineage>
        <taxon>Bacteria</taxon>
        <taxon>Pseudomonadati</taxon>
        <taxon>Pseudomonadota</taxon>
        <taxon>Gammaproteobacteria</taxon>
        <taxon>Enterobacterales</taxon>
        <taxon>Enterobacteriaceae</taxon>
        <taxon>Shigella</taxon>
    </lineage>
</organism>
<comment type="function">
    <text evidence="1">Catalyzes the 1,3-allylic rearrangement of the homoallylic substrate isopentenyl (IPP) to its highly electrophilic allylic isomer, dimethylallyl diphosphate (DMAPP).</text>
</comment>
<comment type="catalytic activity">
    <reaction evidence="1">
        <text>isopentenyl diphosphate = dimethylallyl diphosphate</text>
        <dbReference type="Rhea" id="RHEA:23284"/>
        <dbReference type="ChEBI" id="CHEBI:57623"/>
        <dbReference type="ChEBI" id="CHEBI:128769"/>
        <dbReference type="EC" id="5.3.3.2"/>
    </reaction>
</comment>
<comment type="cofactor">
    <cofactor evidence="1">
        <name>Mg(2+)</name>
        <dbReference type="ChEBI" id="CHEBI:18420"/>
    </cofactor>
    <text evidence="1">Binds 1 Mg(2+) ion per subunit. The magnesium ion binds only when substrate is bound.</text>
</comment>
<comment type="cofactor">
    <cofactor evidence="1">
        <name>Mn(2+)</name>
        <dbReference type="ChEBI" id="CHEBI:29035"/>
    </cofactor>
    <text evidence="1">Binds 1 Mn(2+) ion per subunit.</text>
</comment>
<comment type="pathway">
    <text evidence="1">Isoprenoid biosynthesis; dimethylallyl diphosphate biosynthesis; dimethylallyl diphosphate from isopentenyl diphosphate: step 1/1.</text>
</comment>
<comment type="subunit">
    <text evidence="1">Homodimer.</text>
</comment>
<comment type="subcellular location">
    <subcellularLocation>
        <location evidence="1">Cytoplasm</location>
    </subcellularLocation>
</comment>
<comment type="similarity">
    <text evidence="1">Belongs to the IPP isomerase type 1 family.</text>
</comment>
<accession>Q31WF1</accession>
<dbReference type="EC" id="5.3.3.2" evidence="1"/>
<dbReference type="EMBL" id="CP000036">
    <property type="protein sequence ID" value="ABB67607.1"/>
    <property type="molecule type" value="Genomic_DNA"/>
</dbReference>
<dbReference type="RefSeq" id="WP_001192790.1">
    <property type="nucleotide sequence ID" value="NC_007613.1"/>
</dbReference>
<dbReference type="SMR" id="Q31WF1"/>
<dbReference type="KEGG" id="sbo:SBO_3103"/>
<dbReference type="HOGENOM" id="CLU_060552_2_0_6"/>
<dbReference type="UniPathway" id="UPA00059">
    <property type="reaction ID" value="UER00104"/>
</dbReference>
<dbReference type="Proteomes" id="UP000007067">
    <property type="component" value="Chromosome"/>
</dbReference>
<dbReference type="GO" id="GO:0005737">
    <property type="term" value="C:cytoplasm"/>
    <property type="evidence" value="ECO:0007669"/>
    <property type="project" value="UniProtKB-SubCell"/>
</dbReference>
<dbReference type="GO" id="GO:0004452">
    <property type="term" value="F:isopentenyl-diphosphate delta-isomerase activity"/>
    <property type="evidence" value="ECO:0007669"/>
    <property type="project" value="UniProtKB-UniRule"/>
</dbReference>
<dbReference type="GO" id="GO:0046872">
    <property type="term" value="F:metal ion binding"/>
    <property type="evidence" value="ECO:0007669"/>
    <property type="project" value="UniProtKB-KW"/>
</dbReference>
<dbReference type="GO" id="GO:0050992">
    <property type="term" value="P:dimethylallyl diphosphate biosynthetic process"/>
    <property type="evidence" value="ECO:0007669"/>
    <property type="project" value="UniProtKB-UniRule"/>
</dbReference>
<dbReference type="GO" id="GO:0008299">
    <property type="term" value="P:isoprenoid biosynthetic process"/>
    <property type="evidence" value="ECO:0007669"/>
    <property type="project" value="UniProtKB-KW"/>
</dbReference>
<dbReference type="CDD" id="cd02885">
    <property type="entry name" value="NUDIX_IPP_Isomerase"/>
    <property type="match status" value="1"/>
</dbReference>
<dbReference type="FunFam" id="3.90.79.10:FF:000009">
    <property type="entry name" value="Isopentenyl-diphosphate Delta-isomerase"/>
    <property type="match status" value="1"/>
</dbReference>
<dbReference type="Gene3D" id="3.90.79.10">
    <property type="entry name" value="Nucleoside Triphosphate Pyrophosphohydrolase"/>
    <property type="match status" value="1"/>
</dbReference>
<dbReference type="HAMAP" id="MF_00202">
    <property type="entry name" value="Idi"/>
    <property type="match status" value="1"/>
</dbReference>
<dbReference type="InterPro" id="IPR056375">
    <property type="entry name" value="Idi_bact"/>
</dbReference>
<dbReference type="InterPro" id="IPR011876">
    <property type="entry name" value="IsopentenylPP_isomerase_typ1"/>
</dbReference>
<dbReference type="InterPro" id="IPR015797">
    <property type="entry name" value="NUDIX_hydrolase-like_dom_sf"/>
</dbReference>
<dbReference type="InterPro" id="IPR000086">
    <property type="entry name" value="NUDIX_hydrolase_dom"/>
</dbReference>
<dbReference type="NCBIfam" id="TIGR02150">
    <property type="entry name" value="IPP_isom_1"/>
    <property type="match status" value="1"/>
</dbReference>
<dbReference type="NCBIfam" id="NF002995">
    <property type="entry name" value="PRK03759.1"/>
    <property type="match status" value="1"/>
</dbReference>
<dbReference type="PANTHER" id="PTHR10885">
    <property type="entry name" value="ISOPENTENYL-DIPHOSPHATE DELTA-ISOMERASE"/>
    <property type="match status" value="1"/>
</dbReference>
<dbReference type="PANTHER" id="PTHR10885:SF0">
    <property type="entry name" value="ISOPENTENYL-DIPHOSPHATE DELTA-ISOMERASE"/>
    <property type="match status" value="1"/>
</dbReference>
<dbReference type="Pfam" id="PF00293">
    <property type="entry name" value="NUDIX"/>
    <property type="match status" value="1"/>
</dbReference>
<dbReference type="PIRSF" id="PIRSF018427">
    <property type="entry name" value="Isopntndiph_ism"/>
    <property type="match status" value="1"/>
</dbReference>
<dbReference type="SUPFAM" id="SSF55811">
    <property type="entry name" value="Nudix"/>
    <property type="match status" value="1"/>
</dbReference>
<dbReference type="PROSITE" id="PS51462">
    <property type="entry name" value="NUDIX"/>
    <property type="match status" value="1"/>
</dbReference>
<feature type="chain" id="PRO_0000227127" description="Isopentenyl-diphosphate Delta-isomerase">
    <location>
        <begin position="1"/>
        <end position="182"/>
    </location>
</feature>
<feature type="domain" description="Nudix hydrolase">
    <location>
        <begin position="30"/>
        <end position="164"/>
    </location>
</feature>
<feature type="active site" evidence="1">
    <location>
        <position position="67"/>
    </location>
</feature>
<feature type="active site" evidence="1">
    <location>
        <position position="116"/>
    </location>
</feature>
<feature type="binding site" evidence="1">
    <location>
        <position position="25"/>
    </location>
    <ligand>
        <name>Mn(2+)</name>
        <dbReference type="ChEBI" id="CHEBI:29035"/>
    </ligand>
</feature>
<feature type="binding site" evidence="1">
    <location>
        <position position="32"/>
    </location>
    <ligand>
        <name>Mn(2+)</name>
        <dbReference type="ChEBI" id="CHEBI:29035"/>
    </ligand>
</feature>
<feature type="binding site" evidence="1">
    <location>
        <position position="67"/>
    </location>
    <ligand>
        <name>Mg(2+)</name>
        <dbReference type="ChEBI" id="CHEBI:18420"/>
    </ligand>
</feature>
<feature type="binding site" evidence="1">
    <location>
        <position position="69"/>
    </location>
    <ligand>
        <name>Mn(2+)</name>
        <dbReference type="ChEBI" id="CHEBI:29035"/>
    </ligand>
</feature>
<feature type="binding site" evidence="1">
    <location>
        <position position="87"/>
    </location>
    <ligand>
        <name>Mg(2+)</name>
        <dbReference type="ChEBI" id="CHEBI:18420"/>
    </ligand>
</feature>
<feature type="binding site" evidence="1">
    <location>
        <position position="114"/>
    </location>
    <ligand>
        <name>Mn(2+)</name>
        <dbReference type="ChEBI" id="CHEBI:29035"/>
    </ligand>
</feature>
<feature type="binding site" evidence="1">
    <location>
        <position position="116"/>
    </location>
    <ligand>
        <name>Mn(2+)</name>
        <dbReference type="ChEBI" id="CHEBI:29035"/>
    </ligand>
</feature>
<reference key="1">
    <citation type="journal article" date="2005" name="Nucleic Acids Res.">
        <title>Genome dynamics and diversity of Shigella species, the etiologic agents of bacillary dysentery.</title>
        <authorList>
            <person name="Yang F."/>
            <person name="Yang J."/>
            <person name="Zhang X."/>
            <person name="Chen L."/>
            <person name="Jiang Y."/>
            <person name="Yan Y."/>
            <person name="Tang X."/>
            <person name="Wang J."/>
            <person name="Xiong Z."/>
            <person name="Dong J."/>
            <person name="Xue Y."/>
            <person name="Zhu Y."/>
            <person name="Xu X."/>
            <person name="Sun L."/>
            <person name="Chen S."/>
            <person name="Nie H."/>
            <person name="Peng J."/>
            <person name="Xu J."/>
            <person name="Wang Y."/>
            <person name="Yuan Z."/>
            <person name="Wen Y."/>
            <person name="Yao Z."/>
            <person name="Shen Y."/>
            <person name="Qiang B."/>
            <person name="Hou Y."/>
            <person name="Yu J."/>
            <person name="Jin Q."/>
        </authorList>
    </citation>
    <scope>NUCLEOTIDE SEQUENCE [LARGE SCALE GENOMIC DNA]</scope>
    <source>
        <strain>Sb227</strain>
    </source>
</reference>
<keyword id="KW-0963">Cytoplasm</keyword>
<keyword id="KW-0413">Isomerase</keyword>
<keyword id="KW-0414">Isoprene biosynthesis</keyword>
<keyword id="KW-0460">Magnesium</keyword>
<keyword id="KW-0464">Manganese</keyword>
<keyword id="KW-0479">Metal-binding</keyword>
<sequence>MQTEHVILLNAQGVPTGTLEKYAAHTADTLLHLAFSSWLFNAKGQLLVTRRALSKKAWPGVWTNSVCGHPQLGESNEDAVIRRCRYELGVEITPPESIYPDFRYRATDPNGIVENEVCPVFAARTNSALQINDDEVMDYQWCDLADVLHGIDATPWAFSPWMVMQAANSEARKLLSAFAQHN</sequence>
<protein>
    <recommendedName>
        <fullName evidence="1">Isopentenyl-diphosphate Delta-isomerase</fullName>
        <shortName evidence="1">IPP isomerase</shortName>
        <ecNumber evidence="1">5.3.3.2</ecNumber>
    </recommendedName>
    <alternativeName>
        <fullName evidence="1">IPP:DMAPP isomerase</fullName>
    </alternativeName>
    <alternativeName>
        <fullName evidence="1">Isopentenyl pyrophosphate isomerase</fullName>
    </alternativeName>
</protein>
<evidence type="ECO:0000255" key="1">
    <source>
        <dbReference type="HAMAP-Rule" id="MF_00202"/>
    </source>
</evidence>